<reference key="1">
    <citation type="submission" date="2003-01" db="EMBL/GenBank/DDBJ databases">
        <authorList>
            <consortium name="NIH - Zebrafish Gene Collection (ZGC) project"/>
        </authorList>
    </citation>
    <scope>NUCLEOTIDE SEQUENCE [LARGE SCALE MRNA]</scope>
    <source>
        <strain>AB</strain>
    </source>
</reference>
<organism>
    <name type="scientific">Danio rerio</name>
    <name type="common">Zebrafish</name>
    <name type="synonym">Brachydanio rerio</name>
    <dbReference type="NCBI Taxonomy" id="7955"/>
    <lineage>
        <taxon>Eukaryota</taxon>
        <taxon>Metazoa</taxon>
        <taxon>Chordata</taxon>
        <taxon>Craniata</taxon>
        <taxon>Vertebrata</taxon>
        <taxon>Euteleostomi</taxon>
        <taxon>Actinopterygii</taxon>
        <taxon>Neopterygii</taxon>
        <taxon>Teleostei</taxon>
        <taxon>Ostariophysi</taxon>
        <taxon>Cypriniformes</taxon>
        <taxon>Danionidae</taxon>
        <taxon>Danioninae</taxon>
        <taxon>Danio</taxon>
    </lineage>
</organism>
<comment type="function">
    <text evidence="1">Adapter protein that may provide a link between cell surface epidermal growth factor receptor and the MAPK/ERK signaling pathway. May promote cell proliferation (By similarity).</text>
</comment>
<comment type="similarity">
    <text evidence="3">Belongs to the GAREM family.</text>
</comment>
<feature type="chain" id="PRO_0000277649" description="GRB2-associated and regulator of MAPK protein 1">
    <location>
        <begin position="1"/>
        <end position="867"/>
    </location>
</feature>
<feature type="domain" description="SAM">
    <location>
        <begin position="802"/>
        <end position="867"/>
    </location>
</feature>
<feature type="region of interest" description="CABIT">
    <location>
        <begin position="12"/>
        <end position="322"/>
    </location>
</feature>
<feature type="region of interest" description="Disordered" evidence="2">
    <location>
        <begin position="511"/>
        <end position="530"/>
    </location>
</feature>
<feature type="region of interest" description="Disordered" evidence="2">
    <location>
        <begin position="536"/>
        <end position="594"/>
    </location>
</feature>
<feature type="region of interest" description="Disordered" evidence="2">
    <location>
        <begin position="735"/>
        <end position="758"/>
    </location>
</feature>
<feature type="compositionally biased region" description="Polar residues" evidence="2">
    <location>
        <begin position="544"/>
        <end position="554"/>
    </location>
</feature>
<feature type="compositionally biased region" description="Polar residues" evidence="2">
    <location>
        <begin position="569"/>
        <end position="581"/>
    </location>
</feature>
<feature type="compositionally biased region" description="Basic and acidic residues" evidence="2">
    <location>
        <begin position="740"/>
        <end position="749"/>
    </location>
</feature>
<feature type="modified residue" description="Phosphotyrosine" evidence="1">
    <location>
        <position position="464"/>
    </location>
</feature>
<evidence type="ECO:0000250" key="1"/>
<evidence type="ECO:0000256" key="2">
    <source>
        <dbReference type="SAM" id="MobiDB-lite"/>
    </source>
</evidence>
<evidence type="ECO:0000305" key="3"/>
<proteinExistence type="evidence at transcript level"/>
<keyword id="KW-0497">Mitogen</keyword>
<keyword id="KW-0597">Phosphoprotein</keyword>
<keyword id="KW-1185">Reference proteome</keyword>
<gene>
    <name type="primary">garem1</name>
    <name type="synonym">fam59a</name>
    <name type="synonym">garem</name>
    <name type="ORF">zgc:55634</name>
</gene>
<name>GARE1_DANRE</name>
<accession>Q7ZVU1</accession>
<sequence length="867" mass="95793">MDLGSMLYNSFNNITWSTTTLPLDRLISSYRLPQIVKLDSGESVEGLRENDYLLIHSCRQWTTITAHSLEEGHYVIGPKIEIPVHYEGQFKLLEQDRDIKEPVQYYNSVEEVAKAFPERVYVMEEISFNFKMASGESNEDTEVYNITLSTGDELTLMGQAELLYAKSSREKSRFNTIFKRIGKLNSISKLGRGKMPCLICMNHRTNESISLPFQCRGRFSTCSQLELQMQEGEHTIRTIVEKTRLPVNVMVPSSPPRNPHDLHLIREGHRYKLVNIQTKTVVVCCALRSNKILPVHFPLHVSTALPRLLVPEGLLQGESWFETVVHRWFTYCQEQFDIDDYSRAVRDVRVDWIEDGKSPKKSSAGGTGSGSAICNSSGSGSNGCPSHLHLPSSLSSARDELTQSFHRLSVCVYGNNLHGNSEVNLQGCVSLCGDCAPAEPPDADYLFPELQENSSGSLKSDVPYEELWLDHVKNAGPVLDHNEGVRGNSLSSGCTTALPYPKAGPTSALLSADVNLPPPPVPPKSEAVKEECRLLDAPPIPPRSSKQAGSSSATVPYPSAKPRQKDTRSPSPTLSYYSSGLHSIGGEGESQIESDDQNHACYPCSWIRPDASESSKPLPCLNPSVNASFSRLSWPNDFCGADSYKGEDFQSLHCRSYSSYPRKRTPGTPKACPSGLLDFDKRANFEGKAVSSKVQQVTQSAQFCTKSTSYNMDMCRDKPTDECITKQSQSCPILPPRTPKCTDAKKDAEAATTDTADADAVELESKSCSPDGPHPGTTDVFSVSHPVATGLSWQPPSNLSGISIEEISKSLRFIGLSEDVVSLFVQEKIDGNLLLQLTEEILSEDFKLSKLQVKKLMQFINGWRPKM</sequence>
<dbReference type="EMBL" id="BC045411">
    <property type="protein sequence ID" value="AAH45411.1"/>
    <property type="molecule type" value="mRNA"/>
</dbReference>
<dbReference type="RefSeq" id="NP_956463.1">
    <property type="nucleotide sequence ID" value="NM_200169.2"/>
</dbReference>
<dbReference type="SMR" id="Q7ZVU1"/>
<dbReference type="FunCoup" id="Q7ZVU1">
    <property type="interactions" value="1650"/>
</dbReference>
<dbReference type="STRING" id="7955.ENSDARP00000024393"/>
<dbReference type="PaxDb" id="7955-ENSDARP00000024393"/>
<dbReference type="GeneID" id="393138"/>
<dbReference type="KEGG" id="dre:393138"/>
<dbReference type="AGR" id="ZFIN:ZDB-GENE-040426-767"/>
<dbReference type="CTD" id="393138"/>
<dbReference type="ZFIN" id="ZDB-GENE-040426-767">
    <property type="gene designation" value="garem"/>
</dbReference>
<dbReference type="eggNOG" id="ENOG502QRDN">
    <property type="taxonomic scope" value="Eukaryota"/>
</dbReference>
<dbReference type="InParanoid" id="Q7ZVU1"/>
<dbReference type="OrthoDB" id="6077228at2759"/>
<dbReference type="PhylomeDB" id="Q7ZVU1"/>
<dbReference type="PRO" id="PR:Q7ZVU1"/>
<dbReference type="Proteomes" id="UP000000437">
    <property type="component" value="Chromosome 7"/>
</dbReference>
<dbReference type="GO" id="GO:0070064">
    <property type="term" value="F:proline-rich region binding"/>
    <property type="evidence" value="ECO:0000250"/>
    <property type="project" value="UniProtKB"/>
</dbReference>
<dbReference type="GO" id="GO:0071364">
    <property type="term" value="P:cellular response to epidermal growth factor stimulus"/>
    <property type="evidence" value="ECO:0000250"/>
    <property type="project" value="UniProtKB"/>
</dbReference>
<dbReference type="GO" id="GO:0007173">
    <property type="term" value="P:epidermal growth factor receptor signaling pathway"/>
    <property type="evidence" value="ECO:0000250"/>
    <property type="project" value="UniProtKB"/>
</dbReference>
<dbReference type="GO" id="GO:0051781">
    <property type="term" value="P:positive regulation of cell division"/>
    <property type="evidence" value="ECO:0007669"/>
    <property type="project" value="UniProtKB-KW"/>
</dbReference>
<dbReference type="GO" id="GO:0008284">
    <property type="term" value="P:positive regulation of cell population proliferation"/>
    <property type="evidence" value="ECO:0000250"/>
    <property type="project" value="UniProtKB"/>
</dbReference>
<dbReference type="GO" id="GO:0070374">
    <property type="term" value="P:positive regulation of ERK1 and ERK2 cascade"/>
    <property type="evidence" value="ECO:0000250"/>
    <property type="project" value="UniProtKB"/>
</dbReference>
<dbReference type="CDD" id="cd09525">
    <property type="entry name" value="SAM_GAREM"/>
    <property type="match status" value="1"/>
</dbReference>
<dbReference type="Gene3D" id="1.10.150.50">
    <property type="entry name" value="Transcription Factor, Ets-1"/>
    <property type="match status" value="1"/>
</dbReference>
<dbReference type="InterPro" id="IPR025946">
    <property type="entry name" value="CABIT_dom"/>
</dbReference>
<dbReference type="InterPro" id="IPR052281">
    <property type="entry name" value="GAREM"/>
</dbReference>
<dbReference type="InterPro" id="IPR013761">
    <property type="entry name" value="SAM/pointed_sf"/>
</dbReference>
<dbReference type="PANTHER" id="PTHR14454:SF6">
    <property type="entry name" value="GRB2-ASSOCIATED AND REGULATOR OF MAPK PROTEIN 1"/>
    <property type="match status" value="1"/>
</dbReference>
<dbReference type="PANTHER" id="PTHR14454">
    <property type="entry name" value="GRB2-ASSOCIATED AND REGULATOR OF MAPK PROTEIN FAMILY MEMBER"/>
    <property type="match status" value="1"/>
</dbReference>
<dbReference type="Pfam" id="PF12736">
    <property type="entry name" value="CABIT"/>
    <property type="match status" value="1"/>
</dbReference>
<dbReference type="SUPFAM" id="SSF47769">
    <property type="entry name" value="SAM/Pointed domain"/>
    <property type="match status" value="1"/>
</dbReference>
<protein>
    <recommendedName>
        <fullName>GRB2-associated and regulator of MAPK protein 1</fullName>
    </recommendedName>
    <alternativeName>
        <fullName>GRB2-associated and regulator of MAPK1</fullName>
    </alternativeName>
</protein>